<sequence length="372" mass="39744">MRSKVTGAQRWVVKIGSALLTADGKGLDRGAMAVWVEQMVALREAGVELVLVSSGAVAAGMSQLGWTSRPSAMNELQAAASIGQMRLVQAWESSFGEHGKHTAQILLTHDDLSDRKRYLNARSTLRTLVDLGVVPVINENDTVVTDEIRFGDNDTLAALVANLVEADLLVILTDRDGMFDADPRNNPEAQLIYEARADDPALDAVAGGTGGALGRGGMQTKLRAARLAARSGAHTIIIGGRIERVLDRLKAGERLGTLLSPERGMLAARKQWLAGHLQTRGTLVLDDGAVKALRESNKSLLPVGVKTVQGSFRRGEMVVCVGQDGHEIARGLANYSALEAQKIIGQPSDAIESLLGYSAEPELVHRDNLVLV</sequence>
<protein>
    <recommendedName>
        <fullName evidence="1">Glutamate 5-kinase</fullName>
        <ecNumber evidence="1">2.7.2.11</ecNumber>
    </recommendedName>
    <alternativeName>
        <fullName evidence="1">Gamma-glutamyl kinase</fullName>
        <shortName evidence="1">GK</shortName>
    </alternativeName>
</protein>
<comment type="function">
    <text evidence="1">Catalyzes the transfer of a phosphate group to glutamate to form L-glutamate 5-phosphate.</text>
</comment>
<comment type="catalytic activity">
    <reaction evidence="1">
        <text>L-glutamate + ATP = L-glutamyl 5-phosphate + ADP</text>
        <dbReference type="Rhea" id="RHEA:14877"/>
        <dbReference type="ChEBI" id="CHEBI:29985"/>
        <dbReference type="ChEBI" id="CHEBI:30616"/>
        <dbReference type="ChEBI" id="CHEBI:58274"/>
        <dbReference type="ChEBI" id="CHEBI:456216"/>
        <dbReference type="EC" id="2.7.2.11"/>
    </reaction>
</comment>
<comment type="pathway">
    <text evidence="1">Amino-acid biosynthesis; L-proline biosynthesis; L-glutamate 5-semialdehyde from L-glutamate: step 1/2.</text>
</comment>
<comment type="subcellular location">
    <subcellularLocation>
        <location evidence="1">Cytoplasm</location>
    </subcellularLocation>
</comment>
<comment type="similarity">
    <text evidence="1">Belongs to the glutamate 5-kinase family.</text>
</comment>
<reference key="1">
    <citation type="journal article" date="2006" name="Nat. Biotechnol.">
        <title>Complete genome sequence of the entomopathogenic and metabolically versatile soil bacterium Pseudomonas entomophila.</title>
        <authorList>
            <person name="Vodovar N."/>
            <person name="Vallenet D."/>
            <person name="Cruveiller S."/>
            <person name="Rouy Z."/>
            <person name="Barbe V."/>
            <person name="Acosta C."/>
            <person name="Cattolico L."/>
            <person name="Jubin C."/>
            <person name="Lajus A."/>
            <person name="Segurens B."/>
            <person name="Vacherie B."/>
            <person name="Wincker P."/>
            <person name="Weissenbach J."/>
            <person name="Lemaitre B."/>
            <person name="Medigue C."/>
            <person name="Boccard F."/>
        </authorList>
    </citation>
    <scope>NUCLEOTIDE SEQUENCE [LARGE SCALE GENOMIC DNA]</scope>
    <source>
        <strain>L48</strain>
    </source>
</reference>
<feature type="chain" id="PRO_1000081093" description="Glutamate 5-kinase">
    <location>
        <begin position="1"/>
        <end position="372"/>
    </location>
</feature>
<feature type="domain" description="PUA" evidence="1">
    <location>
        <begin position="280"/>
        <end position="358"/>
    </location>
</feature>
<feature type="binding site" evidence="1">
    <location>
        <position position="14"/>
    </location>
    <ligand>
        <name>ATP</name>
        <dbReference type="ChEBI" id="CHEBI:30616"/>
    </ligand>
</feature>
<feature type="binding site" evidence="1">
    <location>
        <position position="54"/>
    </location>
    <ligand>
        <name>substrate</name>
    </ligand>
</feature>
<feature type="binding site" evidence="1">
    <location>
        <position position="141"/>
    </location>
    <ligand>
        <name>substrate</name>
    </ligand>
</feature>
<feature type="binding site" evidence="1">
    <location>
        <position position="153"/>
    </location>
    <ligand>
        <name>substrate</name>
    </ligand>
</feature>
<feature type="binding site" evidence="1">
    <location>
        <begin position="173"/>
        <end position="174"/>
    </location>
    <ligand>
        <name>ATP</name>
        <dbReference type="ChEBI" id="CHEBI:30616"/>
    </ligand>
</feature>
<accession>Q1IF12</accession>
<evidence type="ECO:0000255" key="1">
    <source>
        <dbReference type="HAMAP-Rule" id="MF_00456"/>
    </source>
</evidence>
<keyword id="KW-0028">Amino-acid biosynthesis</keyword>
<keyword id="KW-0067">ATP-binding</keyword>
<keyword id="KW-0963">Cytoplasm</keyword>
<keyword id="KW-0418">Kinase</keyword>
<keyword id="KW-0547">Nucleotide-binding</keyword>
<keyword id="KW-0641">Proline biosynthesis</keyword>
<keyword id="KW-0808">Transferase</keyword>
<dbReference type="EC" id="2.7.2.11" evidence="1"/>
<dbReference type="EMBL" id="CT573326">
    <property type="protein sequence ID" value="CAK13742.1"/>
    <property type="molecule type" value="Genomic_DNA"/>
</dbReference>
<dbReference type="RefSeq" id="WP_011532171.1">
    <property type="nucleotide sequence ID" value="NC_008027.1"/>
</dbReference>
<dbReference type="SMR" id="Q1IF12"/>
<dbReference type="STRING" id="384676.PSEEN0829"/>
<dbReference type="GeneID" id="32804134"/>
<dbReference type="KEGG" id="pen:PSEEN0829"/>
<dbReference type="eggNOG" id="COG0263">
    <property type="taxonomic scope" value="Bacteria"/>
</dbReference>
<dbReference type="HOGENOM" id="CLU_025400_2_0_6"/>
<dbReference type="OrthoDB" id="9804434at2"/>
<dbReference type="UniPathway" id="UPA00098">
    <property type="reaction ID" value="UER00359"/>
</dbReference>
<dbReference type="Proteomes" id="UP000000658">
    <property type="component" value="Chromosome"/>
</dbReference>
<dbReference type="GO" id="GO:0005829">
    <property type="term" value="C:cytosol"/>
    <property type="evidence" value="ECO:0007669"/>
    <property type="project" value="TreeGrafter"/>
</dbReference>
<dbReference type="GO" id="GO:0005524">
    <property type="term" value="F:ATP binding"/>
    <property type="evidence" value="ECO:0007669"/>
    <property type="project" value="UniProtKB-KW"/>
</dbReference>
<dbReference type="GO" id="GO:0004349">
    <property type="term" value="F:glutamate 5-kinase activity"/>
    <property type="evidence" value="ECO:0007669"/>
    <property type="project" value="UniProtKB-UniRule"/>
</dbReference>
<dbReference type="GO" id="GO:0003723">
    <property type="term" value="F:RNA binding"/>
    <property type="evidence" value="ECO:0007669"/>
    <property type="project" value="InterPro"/>
</dbReference>
<dbReference type="GO" id="GO:0055129">
    <property type="term" value="P:L-proline biosynthetic process"/>
    <property type="evidence" value="ECO:0007669"/>
    <property type="project" value="UniProtKB-UniRule"/>
</dbReference>
<dbReference type="CDD" id="cd04242">
    <property type="entry name" value="AAK_G5K_ProB"/>
    <property type="match status" value="1"/>
</dbReference>
<dbReference type="CDD" id="cd21157">
    <property type="entry name" value="PUA_G5K"/>
    <property type="match status" value="1"/>
</dbReference>
<dbReference type="FunFam" id="2.30.130.10:FF:000007">
    <property type="entry name" value="Glutamate 5-kinase"/>
    <property type="match status" value="1"/>
</dbReference>
<dbReference type="FunFam" id="3.40.1160.10:FF:000018">
    <property type="entry name" value="Glutamate 5-kinase"/>
    <property type="match status" value="1"/>
</dbReference>
<dbReference type="Gene3D" id="3.40.1160.10">
    <property type="entry name" value="Acetylglutamate kinase-like"/>
    <property type="match status" value="2"/>
</dbReference>
<dbReference type="Gene3D" id="2.30.130.10">
    <property type="entry name" value="PUA domain"/>
    <property type="match status" value="1"/>
</dbReference>
<dbReference type="HAMAP" id="MF_00456">
    <property type="entry name" value="ProB"/>
    <property type="match status" value="1"/>
</dbReference>
<dbReference type="InterPro" id="IPR036393">
    <property type="entry name" value="AceGlu_kinase-like_sf"/>
</dbReference>
<dbReference type="InterPro" id="IPR001048">
    <property type="entry name" value="Asp/Glu/Uridylate_kinase"/>
</dbReference>
<dbReference type="InterPro" id="IPR041739">
    <property type="entry name" value="G5K_ProB"/>
</dbReference>
<dbReference type="InterPro" id="IPR001057">
    <property type="entry name" value="Glu/AcGlu_kinase"/>
</dbReference>
<dbReference type="InterPro" id="IPR011529">
    <property type="entry name" value="Glu_5kinase"/>
</dbReference>
<dbReference type="InterPro" id="IPR005715">
    <property type="entry name" value="Glu_5kinase/COase_Synthase"/>
</dbReference>
<dbReference type="InterPro" id="IPR019797">
    <property type="entry name" value="Glutamate_5-kinase_CS"/>
</dbReference>
<dbReference type="InterPro" id="IPR002478">
    <property type="entry name" value="PUA"/>
</dbReference>
<dbReference type="InterPro" id="IPR015947">
    <property type="entry name" value="PUA-like_sf"/>
</dbReference>
<dbReference type="InterPro" id="IPR036974">
    <property type="entry name" value="PUA_sf"/>
</dbReference>
<dbReference type="NCBIfam" id="TIGR01027">
    <property type="entry name" value="proB"/>
    <property type="match status" value="1"/>
</dbReference>
<dbReference type="PANTHER" id="PTHR43654">
    <property type="entry name" value="GLUTAMATE 5-KINASE"/>
    <property type="match status" value="1"/>
</dbReference>
<dbReference type="PANTHER" id="PTHR43654:SF1">
    <property type="entry name" value="ISOPENTENYL PHOSPHATE KINASE"/>
    <property type="match status" value="1"/>
</dbReference>
<dbReference type="Pfam" id="PF00696">
    <property type="entry name" value="AA_kinase"/>
    <property type="match status" value="1"/>
</dbReference>
<dbReference type="Pfam" id="PF01472">
    <property type="entry name" value="PUA"/>
    <property type="match status" value="1"/>
</dbReference>
<dbReference type="PIRSF" id="PIRSF000729">
    <property type="entry name" value="GK"/>
    <property type="match status" value="1"/>
</dbReference>
<dbReference type="PRINTS" id="PR00474">
    <property type="entry name" value="GLU5KINASE"/>
</dbReference>
<dbReference type="SMART" id="SM00359">
    <property type="entry name" value="PUA"/>
    <property type="match status" value="1"/>
</dbReference>
<dbReference type="SUPFAM" id="SSF53633">
    <property type="entry name" value="Carbamate kinase-like"/>
    <property type="match status" value="1"/>
</dbReference>
<dbReference type="SUPFAM" id="SSF88697">
    <property type="entry name" value="PUA domain-like"/>
    <property type="match status" value="1"/>
</dbReference>
<dbReference type="PROSITE" id="PS00902">
    <property type="entry name" value="GLUTAMATE_5_KINASE"/>
    <property type="match status" value="1"/>
</dbReference>
<dbReference type="PROSITE" id="PS50890">
    <property type="entry name" value="PUA"/>
    <property type="match status" value="1"/>
</dbReference>
<name>PROB_PSEE4</name>
<gene>
    <name evidence="1" type="primary">proB</name>
    <name type="ordered locus">PSEEN0829</name>
</gene>
<proteinExistence type="inferred from homology"/>
<organism>
    <name type="scientific">Pseudomonas entomophila (strain L48)</name>
    <dbReference type="NCBI Taxonomy" id="384676"/>
    <lineage>
        <taxon>Bacteria</taxon>
        <taxon>Pseudomonadati</taxon>
        <taxon>Pseudomonadota</taxon>
        <taxon>Gammaproteobacteria</taxon>
        <taxon>Pseudomonadales</taxon>
        <taxon>Pseudomonadaceae</taxon>
        <taxon>Pseudomonas</taxon>
    </lineage>
</organism>